<name>HIS6_BRUC2</name>
<reference key="1">
    <citation type="submission" date="2007-10" db="EMBL/GenBank/DDBJ databases">
        <title>Brucella canis ATCC 23365 whole genome shotgun sequencing project.</title>
        <authorList>
            <person name="Setubal J.C."/>
            <person name="Bowns C."/>
            <person name="Boyle S."/>
            <person name="Crasta O.R."/>
            <person name="Czar M.J."/>
            <person name="Dharmanolla C."/>
            <person name="Gillespie J.J."/>
            <person name="Kenyon R.W."/>
            <person name="Lu J."/>
            <person name="Mane S."/>
            <person name="Mohapatra S."/>
            <person name="Nagrani S."/>
            <person name="Purkayastha A."/>
            <person name="Rajasimha H.K."/>
            <person name="Shallom J.M."/>
            <person name="Shallom S."/>
            <person name="Shukla M."/>
            <person name="Snyder E.E."/>
            <person name="Sobral B.W."/>
            <person name="Wattam A.R."/>
            <person name="Will R."/>
            <person name="Williams K."/>
            <person name="Yoo H."/>
            <person name="Bruce D."/>
            <person name="Detter C."/>
            <person name="Munk C."/>
            <person name="Brettin T.S."/>
        </authorList>
    </citation>
    <scope>NUCLEOTIDE SEQUENCE [LARGE SCALE GENOMIC DNA]</scope>
    <source>
        <strain>ATCC 23365 / NCTC 10854 / RM-666</strain>
    </source>
</reference>
<evidence type="ECO:0000255" key="1">
    <source>
        <dbReference type="HAMAP-Rule" id="MF_01013"/>
    </source>
</evidence>
<feature type="chain" id="PRO_1000084050" description="Imidazole glycerol phosphate synthase subunit HisF">
    <location>
        <begin position="1"/>
        <end position="261"/>
    </location>
</feature>
<feature type="active site" evidence="1">
    <location>
        <position position="12"/>
    </location>
</feature>
<feature type="active site" evidence="1">
    <location>
        <position position="131"/>
    </location>
</feature>
<gene>
    <name evidence="1" type="primary">hisF</name>
    <name type="ordered locus">BCAN_A2131</name>
</gene>
<dbReference type="EC" id="4.3.2.10" evidence="1"/>
<dbReference type="EMBL" id="CP000872">
    <property type="protein sequence ID" value="ABX63114.1"/>
    <property type="molecule type" value="Genomic_DNA"/>
</dbReference>
<dbReference type="RefSeq" id="WP_002965151.1">
    <property type="nucleotide sequence ID" value="NC_010103.1"/>
</dbReference>
<dbReference type="SMR" id="A9M9R9"/>
<dbReference type="GeneID" id="97534652"/>
<dbReference type="KEGG" id="bcs:BCAN_A2131"/>
<dbReference type="HOGENOM" id="CLU_048577_4_0_5"/>
<dbReference type="UniPathway" id="UPA00031">
    <property type="reaction ID" value="UER00010"/>
</dbReference>
<dbReference type="PRO" id="PR:A9M9R9"/>
<dbReference type="Proteomes" id="UP000001385">
    <property type="component" value="Chromosome I"/>
</dbReference>
<dbReference type="GO" id="GO:0005737">
    <property type="term" value="C:cytoplasm"/>
    <property type="evidence" value="ECO:0007669"/>
    <property type="project" value="UniProtKB-SubCell"/>
</dbReference>
<dbReference type="GO" id="GO:0000107">
    <property type="term" value="F:imidazoleglycerol-phosphate synthase activity"/>
    <property type="evidence" value="ECO:0007669"/>
    <property type="project" value="UniProtKB-UniRule"/>
</dbReference>
<dbReference type="GO" id="GO:0016829">
    <property type="term" value="F:lyase activity"/>
    <property type="evidence" value="ECO:0007669"/>
    <property type="project" value="UniProtKB-KW"/>
</dbReference>
<dbReference type="GO" id="GO:0000105">
    <property type="term" value="P:L-histidine biosynthetic process"/>
    <property type="evidence" value="ECO:0007669"/>
    <property type="project" value="UniProtKB-UniRule"/>
</dbReference>
<dbReference type="CDD" id="cd04731">
    <property type="entry name" value="HisF"/>
    <property type="match status" value="1"/>
</dbReference>
<dbReference type="FunFam" id="3.20.20.70:FF:000006">
    <property type="entry name" value="Imidazole glycerol phosphate synthase subunit HisF"/>
    <property type="match status" value="1"/>
</dbReference>
<dbReference type="Gene3D" id="3.20.20.70">
    <property type="entry name" value="Aldolase class I"/>
    <property type="match status" value="1"/>
</dbReference>
<dbReference type="HAMAP" id="MF_01013">
    <property type="entry name" value="HisF"/>
    <property type="match status" value="1"/>
</dbReference>
<dbReference type="InterPro" id="IPR013785">
    <property type="entry name" value="Aldolase_TIM"/>
</dbReference>
<dbReference type="InterPro" id="IPR006062">
    <property type="entry name" value="His_biosynth"/>
</dbReference>
<dbReference type="InterPro" id="IPR004651">
    <property type="entry name" value="HisF"/>
</dbReference>
<dbReference type="InterPro" id="IPR050064">
    <property type="entry name" value="IGPS_HisA/HisF"/>
</dbReference>
<dbReference type="InterPro" id="IPR011060">
    <property type="entry name" value="RibuloseP-bd_barrel"/>
</dbReference>
<dbReference type="NCBIfam" id="TIGR00735">
    <property type="entry name" value="hisF"/>
    <property type="match status" value="1"/>
</dbReference>
<dbReference type="PANTHER" id="PTHR21235:SF2">
    <property type="entry name" value="IMIDAZOLE GLYCEROL PHOSPHATE SYNTHASE HISHF"/>
    <property type="match status" value="1"/>
</dbReference>
<dbReference type="PANTHER" id="PTHR21235">
    <property type="entry name" value="IMIDAZOLE GLYCEROL PHOSPHATE SYNTHASE SUBUNIT HISF/H IGP SYNTHASE SUBUNIT HISF/H"/>
    <property type="match status" value="1"/>
</dbReference>
<dbReference type="Pfam" id="PF00977">
    <property type="entry name" value="His_biosynth"/>
    <property type="match status" value="1"/>
</dbReference>
<dbReference type="SUPFAM" id="SSF51366">
    <property type="entry name" value="Ribulose-phoshate binding barrel"/>
    <property type="match status" value="1"/>
</dbReference>
<accession>A9M9R9</accession>
<protein>
    <recommendedName>
        <fullName evidence="1">Imidazole glycerol phosphate synthase subunit HisF</fullName>
        <ecNumber evidence="1">4.3.2.10</ecNumber>
    </recommendedName>
    <alternativeName>
        <fullName evidence="1">IGP synthase cyclase subunit</fullName>
    </alternativeName>
    <alternativeName>
        <fullName evidence="1">IGP synthase subunit HisF</fullName>
    </alternativeName>
    <alternativeName>
        <fullName evidence="1">ImGP synthase subunit HisF</fullName>
        <shortName evidence="1">IGPS subunit HisF</shortName>
    </alternativeName>
</protein>
<comment type="function">
    <text evidence="1">IGPS catalyzes the conversion of PRFAR and glutamine to IGP, AICAR and glutamate. The HisF subunit catalyzes the cyclization activity that produces IGP and AICAR from PRFAR using the ammonia provided by the HisH subunit.</text>
</comment>
<comment type="catalytic activity">
    <reaction evidence="1">
        <text>5-[(5-phospho-1-deoxy-D-ribulos-1-ylimino)methylamino]-1-(5-phospho-beta-D-ribosyl)imidazole-4-carboxamide + L-glutamine = D-erythro-1-(imidazol-4-yl)glycerol 3-phosphate + 5-amino-1-(5-phospho-beta-D-ribosyl)imidazole-4-carboxamide + L-glutamate + H(+)</text>
        <dbReference type="Rhea" id="RHEA:24793"/>
        <dbReference type="ChEBI" id="CHEBI:15378"/>
        <dbReference type="ChEBI" id="CHEBI:29985"/>
        <dbReference type="ChEBI" id="CHEBI:58278"/>
        <dbReference type="ChEBI" id="CHEBI:58359"/>
        <dbReference type="ChEBI" id="CHEBI:58475"/>
        <dbReference type="ChEBI" id="CHEBI:58525"/>
        <dbReference type="EC" id="4.3.2.10"/>
    </reaction>
</comment>
<comment type="pathway">
    <text evidence="1">Amino-acid biosynthesis; L-histidine biosynthesis; L-histidine from 5-phospho-alpha-D-ribose 1-diphosphate: step 5/9.</text>
</comment>
<comment type="subunit">
    <text evidence="1">Heterodimer of HisH and HisF.</text>
</comment>
<comment type="subcellular location">
    <subcellularLocation>
        <location evidence="1">Cytoplasm</location>
    </subcellularLocation>
</comment>
<comment type="similarity">
    <text evidence="1">Belongs to the HisA/HisF family.</text>
</comment>
<proteinExistence type="inferred from homology"/>
<sequence>MTLKARVIPCLDVKDGRVVKGVNFVDLIDAGDPVEAARAYDAAGADELCFLDITASSDNRETIFDVVARTAEQCFMPLTVGGGVRQVADIRKLLLAGADKVSINTAAVKNPEFVAEAADKFGNQCIVVAIDAKKVSGAGENDRWEIFTHGGRQPTGIDAVEFAQKVVDLGAGEILLTSMDRDGTKAGYDVALTRAVADSVRAPVIASGGVGTLDHLVAGIRDGHATAVLAASIFHFGTYTIGEAKRYMAEAGIPMRLDPVR</sequence>
<keyword id="KW-0028">Amino-acid biosynthesis</keyword>
<keyword id="KW-0963">Cytoplasm</keyword>
<keyword id="KW-0368">Histidine biosynthesis</keyword>
<keyword id="KW-0456">Lyase</keyword>
<keyword id="KW-1185">Reference proteome</keyword>
<organism>
    <name type="scientific">Brucella canis (strain ATCC 23365 / NCTC 10854 / RM-666)</name>
    <dbReference type="NCBI Taxonomy" id="483179"/>
    <lineage>
        <taxon>Bacteria</taxon>
        <taxon>Pseudomonadati</taxon>
        <taxon>Pseudomonadota</taxon>
        <taxon>Alphaproteobacteria</taxon>
        <taxon>Hyphomicrobiales</taxon>
        <taxon>Brucellaceae</taxon>
        <taxon>Brucella/Ochrobactrum group</taxon>
        <taxon>Brucella</taxon>
    </lineage>
</organism>